<reference key="1">
    <citation type="journal article" date="2009" name="Stand. Genomic Sci.">
        <title>Complete genome sequence of Methanocorpusculum labreanum type strain Z.</title>
        <authorList>
            <person name="Anderson I.J."/>
            <person name="Sieprawska-Lupa M."/>
            <person name="Goltsman E."/>
            <person name="Lapidus A."/>
            <person name="Copeland A."/>
            <person name="Glavina Del Rio T."/>
            <person name="Tice H."/>
            <person name="Dalin E."/>
            <person name="Barry K."/>
            <person name="Pitluck S."/>
            <person name="Hauser L."/>
            <person name="Land M."/>
            <person name="Lucas S."/>
            <person name="Richardson P."/>
            <person name="Whitman W.B."/>
            <person name="Kyrpides N.C."/>
        </authorList>
    </citation>
    <scope>NUCLEOTIDE SEQUENCE [LARGE SCALE GENOMIC DNA]</scope>
    <source>
        <strain>ATCC 43576 / DSM 4855 / Z</strain>
    </source>
</reference>
<proteinExistence type="inferred from homology"/>
<protein>
    <recommendedName>
        <fullName evidence="1">DNA polymerase sliding clamp</fullName>
    </recommendedName>
    <alternativeName>
        <fullName evidence="1">Proliferating cell nuclear antigen homolog</fullName>
        <shortName evidence="1">PCNA</shortName>
    </alternativeName>
</protein>
<keyword id="KW-0235">DNA replication</keyword>
<keyword id="KW-0238">DNA-binding</keyword>
<keyword id="KW-1185">Reference proteome</keyword>
<organism>
    <name type="scientific">Methanocorpusculum labreanum (strain ATCC 43576 / DSM 4855 / Z)</name>
    <dbReference type="NCBI Taxonomy" id="410358"/>
    <lineage>
        <taxon>Archaea</taxon>
        <taxon>Methanobacteriati</taxon>
        <taxon>Methanobacteriota</taxon>
        <taxon>Stenosarchaea group</taxon>
        <taxon>Methanomicrobia</taxon>
        <taxon>Methanomicrobiales</taxon>
        <taxon>Methanocorpusculaceae</taxon>
        <taxon>Methanocorpusculum</taxon>
    </lineage>
</organism>
<accession>A2SSW6</accession>
<feature type="chain" id="PRO_1000132969" description="DNA polymerase sliding clamp">
    <location>
        <begin position="1"/>
        <end position="247"/>
    </location>
</feature>
<sequence length="247" mass="26908">MLKATIEADIFRETIDAVSALVNECRLHVDEKGIRTITVDTSNVAMVSLELSASAFLTFAAEPCEIGLDIEKIRSMMSMIGKTDIVSLELDESGKKLKISFGGYEYSITLLDTKTIRKDPNAPNLNLPATFEVPGVMFNDAIKASSMVSDKISLAVSAETCVFTMNADGDSDRIKRELTGDDVHYLTCADARSLFSLDYLKDMGKSIGRAEKVQIRLGTDHPVQFSFVYAGGKGSVGYLLAPRIEAD</sequence>
<gene>
    <name evidence="1" type="primary">pcn</name>
    <name type="ordered locus">Mlab_1253</name>
</gene>
<dbReference type="EMBL" id="CP000559">
    <property type="protein sequence ID" value="ABN07422.1"/>
    <property type="molecule type" value="Genomic_DNA"/>
</dbReference>
<dbReference type="RefSeq" id="WP_011833625.1">
    <property type="nucleotide sequence ID" value="NC_008942.1"/>
</dbReference>
<dbReference type="SMR" id="A2SSW6"/>
<dbReference type="STRING" id="410358.Mlab_1253"/>
<dbReference type="GeneID" id="4794814"/>
<dbReference type="KEGG" id="mla:Mlab_1253"/>
<dbReference type="eggNOG" id="arCOG00488">
    <property type="taxonomic scope" value="Archaea"/>
</dbReference>
<dbReference type="HOGENOM" id="CLU_043978_1_1_2"/>
<dbReference type="OrthoDB" id="14749at2157"/>
<dbReference type="Proteomes" id="UP000000365">
    <property type="component" value="Chromosome"/>
</dbReference>
<dbReference type="GO" id="GO:0003677">
    <property type="term" value="F:DNA binding"/>
    <property type="evidence" value="ECO:0007669"/>
    <property type="project" value="UniProtKB-UniRule"/>
</dbReference>
<dbReference type="GO" id="GO:0030337">
    <property type="term" value="F:DNA polymerase processivity factor activity"/>
    <property type="evidence" value="ECO:0007669"/>
    <property type="project" value="UniProtKB-UniRule"/>
</dbReference>
<dbReference type="GO" id="GO:0006272">
    <property type="term" value="P:leading strand elongation"/>
    <property type="evidence" value="ECO:0007669"/>
    <property type="project" value="TreeGrafter"/>
</dbReference>
<dbReference type="GO" id="GO:0006275">
    <property type="term" value="P:regulation of DNA replication"/>
    <property type="evidence" value="ECO:0007669"/>
    <property type="project" value="UniProtKB-UniRule"/>
</dbReference>
<dbReference type="CDD" id="cd00577">
    <property type="entry name" value="PCNA"/>
    <property type="match status" value="1"/>
</dbReference>
<dbReference type="Gene3D" id="3.70.10.10">
    <property type="match status" value="1"/>
</dbReference>
<dbReference type="HAMAP" id="MF_00317">
    <property type="entry name" value="DNApol_clamp_arch"/>
    <property type="match status" value="1"/>
</dbReference>
<dbReference type="InterPro" id="IPR046938">
    <property type="entry name" value="DNA_clamp_sf"/>
</dbReference>
<dbReference type="InterPro" id="IPR000730">
    <property type="entry name" value="Pr_cel_nuc_antig"/>
</dbReference>
<dbReference type="InterPro" id="IPR022649">
    <property type="entry name" value="Pr_cel_nuc_antig_C"/>
</dbReference>
<dbReference type="InterPro" id="IPR022648">
    <property type="entry name" value="Pr_cel_nuc_antig_N"/>
</dbReference>
<dbReference type="NCBIfam" id="NF002222">
    <property type="entry name" value="PRK01115.1-5"/>
    <property type="match status" value="1"/>
</dbReference>
<dbReference type="PANTHER" id="PTHR11352">
    <property type="entry name" value="PROLIFERATING CELL NUCLEAR ANTIGEN"/>
    <property type="match status" value="1"/>
</dbReference>
<dbReference type="PANTHER" id="PTHR11352:SF0">
    <property type="entry name" value="PROLIFERATING CELL NUCLEAR ANTIGEN"/>
    <property type="match status" value="1"/>
</dbReference>
<dbReference type="Pfam" id="PF02747">
    <property type="entry name" value="PCNA_C"/>
    <property type="match status" value="1"/>
</dbReference>
<dbReference type="Pfam" id="PF00705">
    <property type="entry name" value="PCNA_N"/>
    <property type="match status" value="1"/>
</dbReference>
<dbReference type="PRINTS" id="PR00339">
    <property type="entry name" value="PCNACYCLIN"/>
</dbReference>
<dbReference type="SUPFAM" id="SSF55979">
    <property type="entry name" value="DNA clamp"/>
    <property type="match status" value="2"/>
</dbReference>
<name>PCNA_METLZ</name>
<evidence type="ECO:0000255" key="1">
    <source>
        <dbReference type="HAMAP-Rule" id="MF_00317"/>
    </source>
</evidence>
<comment type="function">
    <text evidence="1">Sliding clamp subunit that acts as a moving platform for DNA processing. Responsible for tethering the catalytic subunit of DNA polymerase and other proteins to DNA during high-speed replication.</text>
</comment>
<comment type="subunit">
    <text evidence="1">Homotrimer. The subunits circularize to form a toroid; DNA passes through its center. Replication factor C (RFC) is required to load the toroid on the DNA.</text>
</comment>
<comment type="similarity">
    <text evidence="1">Belongs to the PCNA family.</text>
</comment>